<protein>
    <recommendedName>
        <fullName>Germin-like protein subfamily 1 member 1</fullName>
    </recommendedName>
</protein>
<organism>
    <name type="scientific">Arabidopsis thaliana</name>
    <name type="common">Mouse-ear cress</name>
    <dbReference type="NCBI Taxonomy" id="3702"/>
    <lineage>
        <taxon>Eukaryota</taxon>
        <taxon>Viridiplantae</taxon>
        <taxon>Streptophyta</taxon>
        <taxon>Embryophyta</taxon>
        <taxon>Tracheophyta</taxon>
        <taxon>Spermatophyta</taxon>
        <taxon>Magnoliopsida</taxon>
        <taxon>eudicotyledons</taxon>
        <taxon>Gunneridae</taxon>
        <taxon>Pentapetalae</taxon>
        <taxon>rosids</taxon>
        <taxon>malvids</taxon>
        <taxon>Brassicales</taxon>
        <taxon>Brassicaceae</taxon>
        <taxon>Camelineae</taxon>
        <taxon>Arabidopsis</taxon>
    </lineage>
</organism>
<accession>P92998</accession>
<accession>Q9S7Q1</accession>
<name>GL11_ARATH</name>
<feature type="signal peptide" evidence="2">
    <location>
        <begin position="1"/>
        <end position="18"/>
    </location>
</feature>
<feature type="chain" id="PRO_0000010801" description="Germin-like protein subfamily 1 member 1">
    <location>
        <begin position="19"/>
        <end position="217"/>
    </location>
</feature>
<feature type="domain" description="Cupin type-1" evidence="2">
    <location>
        <begin position="59"/>
        <end position="209"/>
    </location>
</feature>
<feature type="binding site" evidence="1">
    <location>
        <position position="108"/>
    </location>
    <ligand>
        <name>Mn(2+)</name>
        <dbReference type="ChEBI" id="CHEBI:29035"/>
    </ligand>
</feature>
<feature type="binding site" evidence="1">
    <location>
        <position position="110"/>
    </location>
    <ligand>
        <name>Mn(2+)</name>
        <dbReference type="ChEBI" id="CHEBI:29035"/>
    </ligand>
</feature>
<feature type="binding site" evidence="1">
    <location>
        <position position="115"/>
    </location>
    <ligand>
        <name>Mn(2+)</name>
        <dbReference type="ChEBI" id="CHEBI:29035"/>
    </ligand>
</feature>
<feature type="binding site" evidence="1">
    <location>
        <position position="154"/>
    </location>
    <ligand>
        <name>Mn(2+)</name>
        <dbReference type="ChEBI" id="CHEBI:29035"/>
    </ligand>
</feature>
<feature type="glycosylation site" description="N-linked (GlcNAc...) asparagine" evidence="2">
    <location>
        <position position="75"/>
    </location>
</feature>
<feature type="disulfide bond" evidence="1">
    <location>
        <begin position="27"/>
        <end position="45"/>
    </location>
</feature>
<keyword id="KW-0052">Apoplast</keyword>
<keyword id="KW-1015">Disulfide bond</keyword>
<keyword id="KW-0325">Glycoprotein</keyword>
<keyword id="KW-0464">Manganese</keyword>
<keyword id="KW-0479">Metal-binding</keyword>
<keyword id="KW-1185">Reference proteome</keyword>
<keyword id="KW-0964">Secreted</keyword>
<keyword id="KW-0732">Signal</keyword>
<reference key="1">
    <citation type="online journal article" date="1999" name="Plant Gene Register">
        <title>Characterization of a gymnosperm-like germin-like protein (GLP7) gene from Arabidopsis thaliana.</title>
        <authorList>
            <person name="Carter C."/>
            <person name="Thornburg R.W."/>
        </authorList>
        <locator>PGR99-134</locator>
    </citation>
    <scope>NUCLEOTIDE SEQUENCE [GENOMIC DNA]</scope>
    <source>
        <strain>cv. Landsberg erecta</strain>
    </source>
</reference>
<reference key="2">
    <citation type="journal article" date="2000" name="Nature">
        <title>Sequence and analysis of chromosome 1 of the plant Arabidopsis thaliana.</title>
        <authorList>
            <person name="Theologis A."/>
            <person name="Ecker J.R."/>
            <person name="Palm C.J."/>
            <person name="Federspiel N.A."/>
            <person name="Kaul S."/>
            <person name="White O."/>
            <person name="Alonso J."/>
            <person name="Altafi H."/>
            <person name="Araujo R."/>
            <person name="Bowman C.L."/>
            <person name="Brooks S.Y."/>
            <person name="Buehler E."/>
            <person name="Chan A."/>
            <person name="Chao Q."/>
            <person name="Chen H."/>
            <person name="Cheuk R.F."/>
            <person name="Chin C.W."/>
            <person name="Chung M.K."/>
            <person name="Conn L."/>
            <person name="Conway A.B."/>
            <person name="Conway A.R."/>
            <person name="Creasy T.H."/>
            <person name="Dewar K."/>
            <person name="Dunn P."/>
            <person name="Etgu P."/>
            <person name="Feldblyum T.V."/>
            <person name="Feng J.-D."/>
            <person name="Fong B."/>
            <person name="Fujii C.Y."/>
            <person name="Gill J.E."/>
            <person name="Goldsmith A.D."/>
            <person name="Haas B."/>
            <person name="Hansen N.F."/>
            <person name="Hughes B."/>
            <person name="Huizar L."/>
            <person name="Hunter J.L."/>
            <person name="Jenkins J."/>
            <person name="Johnson-Hopson C."/>
            <person name="Khan S."/>
            <person name="Khaykin E."/>
            <person name="Kim C.J."/>
            <person name="Koo H.L."/>
            <person name="Kremenetskaia I."/>
            <person name="Kurtz D.B."/>
            <person name="Kwan A."/>
            <person name="Lam B."/>
            <person name="Langin-Hooper S."/>
            <person name="Lee A."/>
            <person name="Lee J.M."/>
            <person name="Lenz C.A."/>
            <person name="Li J.H."/>
            <person name="Li Y.-P."/>
            <person name="Lin X."/>
            <person name="Liu S.X."/>
            <person name="Liu Z.A."/>
            <person name="Luros J.S."/>
            <person name="Maiti R."/>
            <person name="Marziali A."/>
            <person name="Militscher J."/>
            <person name="Miranda M."/>
            <person name="Nguyen M."/>
            <person name="Nierman W.C."/>
            <person name="Osborne B.I."/>
            <person name="Pai G."/>
            <person name="Peterson J."/>
            <person name="Pham P.K."/>
            <person name="Rizzo M."/>
            <person name="Rooney T."/>
            <person name="Rowley D."/>
            <person name="Sakano H."/>
            <person name="Salzberg S.L."/>
            <person name="Schwartz J.R."/>
            <person name="Shinn P."/>
            <person name="Southwick A.M."/>
            <person name="Sun H."/>
            <person name="Tallon L.J."/>
            <person name="Tambunga G."/>
            <person name="Toriumi M.J."/>
            <person name="Town C.D."/>
            <person name="Utterback T."/>
            <person name="Van Aken S."/>
            <person name="Vaysberg M."/>
            <person name="Vysotskaia V.S."/>
            <person name="Walker M."/>
            <person name="Wu D."/>
            <person name="Yu G."/>
            <person name="Fraser C.M."/>
            <person name="Venter J.C."/>
            <person name="Davis R.W."/>
        </authorList>
    </citation>
    <scope>NUCLEOTIDE SEQUENCE [LARGE SCALE GENOMIC DNA]</scope>
    <source>
        <strain>cv. Columbia</strain>
    </source>
</reference>
<reference key="3">
    <citation type="journal article" date="2017" name="Plant J.">
        <title>Araport11: a complete reannotation of the Arabidopsis thaliana reference genome.</title>
        <authorList>
            <person name="Cheng C.Y."/>
            <person name="Krishnakumar V."/>
            <person name="Chan A.P."/>
            <person name="Thibaud-Nissen F."/>
            <person name="Schobel S."/>
            <person name="Town C.D."/>
        </authorList>
    </citation>
    <scope>GENOME REANNOTATION</scope>
    <source>
        <strain>cv. Columbia</strain>
    </source>
</reference>
<reference key="4">
    <citation type="journal article" date="1998" name="Plant Mol. Biol.">
        <title>Arabidopsis thaliana contains a large family of germin-like proteins: characterization of cDNA and genomic sequences encoding 12 unique family members.</title>
        <authorList>
            <person name="Carter C."/>
            <person name="Graham R.A."/>
            <person name="Thornburg R.W."/>
        </authorList>
    </citation>
    <scope>NUCLEOTIDE SEQUENCE [MRNA] OF 71-217</scope>
    <source>
        <strain>cv. Columbia</strain>
    </source>
</reference>
<evidence type="ECO:0000250" key="1"/>
<evidence type="ECO:0000255" key="2"/>
<evidence type="ECO:0000305" key="3"/>
<dbReference type="EMBL" id="AF170550">
    <property type="protein sequence ID" value="AAD46923.1"/>
    <property type="molecule type" value="Genomic_DNA"/>
</dbReference>
<dbReference type="EMBL" id="AC007067">
    <property type="protein sequence ID" value="AAD39567.1"/>
    <property type="molecule type" value="Genomic_DNA"/>
</dbReference>
<dbReference type="EMBL" id="CP002684">
    <property type="protein sequence ID" value="AEE28582.1"/>
    <property type="molecule type" value="Genomic_DNA"/>
</dbReference>
<dbReference type="EMBL" id="U75202">
    <property type="protein sequence ID" value="AAB51580.1"/>
    <property type="molecule type" value="mRNA"/>
</dbReference>
<dbReference type="PIR" id="D86238">
    <property type="entry name" value="D86238"/>
</dbReference>
<dbReference type="RefSeq" id="NP_563870.2">
    <property type="nucleotide sequence ID" value="NM_100920.4"/>
</dbReference>
<dbReference type="SMR" id="P92998"/>
<dbReference type="FunCoup" id="P92998">
    <property type="interactions" value="44"/>
</dbReference>
<dbReference type="STRING" id="3702.P92998"/>
<dbReference type="GlyCosmos" id="P92998">
    <property type="glycosylation" value="1 site, No reported glycans"/>
</dbReference>
<dbReference type="GlyGen" id="P92998">
    <property type="glycosylation" value="1 site"/>
</dbReference>
<dbReference type="iPTMnet" id="P92998"/>
<dbReference type="PaxDb" id="3702-AT1G10460.1"/>
<dbReference type="ProteomicsDB" id="230462"/>
<dbReference type="EnsemblPlants" id="AT1G10460.1">
    <property type="protein sequence ID" value="AT1G10460.1"/>
    <property type="gene ID" value="AT1G10460"/>
</dbReference>
<dbReference type="GeneID" id="837586"/>
<dbReference type="Gramene" id="AT1G10460.1">
    <property type="protein sequence ID" value="AT1G10460.1"/>
    <property type="gene ID" value="AT1G10460"/>
</dbReference>
<dbReference type="KEGG" id="ath:AT1G10460"/>
<dbReference type="Araport" id="AT1G10460"/>
<dbReference type="TAIR" id="AT1G10460">
    <property type="gene designation" value="GLP7"/>
</dbReference>
<dbReference type="eggNOG" id="ENOG502QQ4A">
    <property type="taxonomic scope" value="Eukaryota"/>
</dbReference>
<dbReference type="HOGENOM" id="CLU_015790_0_3_1"/>
<dbReference type="InParanoid" id="P92998"/>
<dbReference type="OMA" id="MIHFLYN"/>
<dbReference type="PhylomeDB" id="P92998"/>
<dbReference type="PRO" id="PR:P92998"/>
<dbReference type="Proteomes" id="UP000006548">
    <property type="component" value="Chromosome 1"/>
</dbReference>
<dbReference type="ExpressionAtlas" id="P92998">
    <property type="expression patterns" value="baseline and differential"/>
</dbReference>
<dbReference type="GO" id="GO:0048046">
    <property type="term" value="C:apoplast"/>
    <property type="evidence" value="ECO:0007669"/>
    <property type="project" value="UniProtKB-SubCell"/>
</dbReference>
<dbReference type="GO" id="GO:0030145">
    <property type="term" value="F:manganese ion binding"/>
    <property type="evidence" value="ECO:0007669"/>
    <property type="project" value="InterPro"/>
</dbReference>
<dbReference type="CDD" id="cd02241">
    <property type="entry name" value="cupin_OxOx"/>
    <property type="match status" value="1"/>
</dbReference>
<dbReference type="FunFam" id="2.60.120.10:FF:000025">
    <property type="entry name" value="germin-like protein subfamily 2 member 1"/>
    <property type="match status" value="1"/>
</dbReference>
<dbReference type="Gene3D" id="2.60.120.10">
    <property type="entry name" value="Jelly Rolls"/>
    <property type="match status" value="1"/>
</dbReference>
<dbReference type="InterPro" id="IPR006045">
    <property type="entry name" value="Cupin_1"/>
</dbReference>
<dbReference type="InterPro" id="IPR001929">
    <property type="entry name" value="Germin"/>
</dbReference>
<dbReference type="InterPro" id="IPR019780">
    <property type="entry name" value="Germin_Mn-BS"/>
</dbReference>
<dbReference type="InterPro" id="IPR014710">
    <property type="entry name" value="RmlC-like_jellyroll"/>
</dbReference>
<dbReference type="InterPro" id="IPR011051">
    <property type="entry name" value="RmlC_Cupin_sf"/>
</dbReference>
<dbReference type="PANTHER" id="PTHR31238">
    <property type="entry name" value="GERMIN-LIKE PROTEIN SUBFAMILY 3 MEMBER 3"/>
    <property type="match status" value="1"/>
</dbReference>
<dbReference type="Pfam" id="PF00190">
    <property type="entry name" value="Cupin_1"/>
    <property type="match status" value="1"/>
</dbReference>
<dbReference type="PRINTS" id="PR00325">
    <property type="entry name" value="GERMIN"/>
</dbReference>
<dbReference type="SMART" id="SM00835">
    <property type="entry name" value="Cupin_1"/>
    <property type="match status" value="1"/>
</dbReference>
<dbReference type="SUPFAM" id="SSF51182">
    <property type="entry name" value="RmlC-like cupins"/>
    <property type="match status" value="1"/>
</dbReference>
<dbReference type="PROSITE" id="PS00725">
    <property type="entry name" value="GERMIN"/>
    <property type="match status" value="1"/>
</dbReference>
<sequence length="217" mass="23195">MILNILLTLTLLMGRVKSDPDPLQDYCVSPPPSSHQQIFLNGKLCKDPTQASVSDFSTSALSRPGNTKTKPFMINVTVTTTANLPGLNTVGLTMARLDFGGSGVVPPHVHPRASEVTVCLDGVLLVGFVDTSGRVFTQELHPGETFVFPKGLIHFLYNIDTVSSALAVSGLSSQNPGTQIVSLSSFISKPPFLVEVLKSAYDINGQDVARIRKSLEG</sequence>
<comment type="function">
    <text>May play a role in plant defense. Probably has no oxalate oxidase activity even if the active site is conserved.</text>
</comment>
<comment type="subunit">
    <text evidence="1">Oligomer (believed to be a pentamer but probably hexamer).</text>
</comment>
<comment type="subcellular location">
    <subcellularLocation>
        <location evidence="1">Secreted</location>
        <location evidence="1">Extracellular space</location>
        <location evidence="1">Apoplast</location>
    </subcellularLocation>
</comment>
<comment type="similarity">
    <text evidence="3">Belongs to the germin family.</text>
</comment>
<gene>
    <name type="primary">GLP7</name>
    <name type="ordered locus">At1g10460</name>
    <name type="ORF">T10O24.7</name>
</gene>
<proteinExistence type="evidence at transcript level"/>